<sequence>MITSAAGIISLLDEEEPQLKEFALHKLNAVVNDFWAEISESVDKIEVLYEDEGFRSRQFAALVASKVFYHLGAFEESLNYALGAGDLFNVNDNSEYVETIIAKCIDHYTKQCVENAELPEGEKKPVDERLEGIVNKMFQRCLDDHKYKQAIGIALETRRLDIFEKTILESNDVPGMLAYSLKLCMSLMQNKQFRNKVLRVLVKIYMNLEKPDFINVCQCLIFLDDPQAVSDILEKLVKEDNLLMAYQICFDLYESASQQFLSSVIQNLRTVGTPIASVPGSTNTGTVPGSEKDSDAMEAEEKPGSTCVGKSAEINPEPKDQISKMIKILSGEMAIELHLQFLIRNNNTDLMILKNTKDAVRNSVCHTATVIANSFMHCGTTSDQFLRDNLEWLARATNWAKFTATASLGVIHKGHEKEALQLMATYLPKDTSPGSAYQEGGGLYALGLIHANHGGDIIDYLLNQLKNASNDIVRHGGSLGLGLAAMGTARQDVYDLLKTNLYQDDAVTGEAAGLALGLVMLGSKNAQAIEDMVGYAQETQHEKILRGLAVGIALVMYGRMEEADALIESLCRDKDPILRRSGMYTVAMAYCGSGNNKAIRRLLHVAVSDVNDDVRRAAVESLGFILFRTPEQCPSVVSLLSESYNPHVRYGAAMALGICCAGTGNKEAINLLEPMTNDPVNYVRQGALIASALIMIQQTEITCPKVSQFRQLYSKVINDKHDDVMAKFGAILAQGILDAGGHNVIISLQSRTGHTHMPSVVGVLVFTQFWFWFPLSHFLSLAFTPTCVIGLNKDLKMPKVQYKSNCKPSTFAYPPPLEVPKEKEKEKVSTAVLSITAKAKKKEKEKEKEKKEEEKMEVDETEKKDEKEKKKEPEPNFQLLDNPARVMPAQLKVLTMTESCRYQPFKPLSIGGIIILKDTSEDMEELVEPVAAHGPKIEEEEQEPEPPEPFEYIDD</sequence>
<gene>
    <name type="primary">PSMD1</name>
    <name type="ORF">RCJMB04_3m24</name>
</gene>
<dbReference type="EMBL" id="AJ851482">
    <property type="protein sequence ID" value="CAH65116.1"/>
    <property type="molecule type" value="mRNA"/>
</dbReference>
<dbReference type="RefSeq" id="NP_001012618.2">
    <property type="nucleotide sequence ID" value="NM_001012600.3"/>
</dbReference>
<dbReference type="SMR" id="Q5F418"/>
<dbReference type="FunCoup" id="Q5F418">
    <property type="interactions" value="2959"/>
</dbReference>
<dbReference type="STRING" id="9031.ENSGALP00000052471"/>
<dbReference type="PaxDb" id="9031-ENSGALP00000012405"/>
<dbReference type="GeneID" id="424926"/>
<dbReference type="KEGG" id="gga:424926"/>
<dbReference type="CTD" id="5707"/>
<dbReference type="VEuPathDB" id="HostDB:geneid_424926"/>
<dbReference type="eggNOG" id="KOG2062">
    <property type="taxonomic scope" value="Eukaryota"/>
</dbReference>
<dbReference type="InParanoid" id="Q5F418"/>
<dbReference type="OrthoDB" id="261572at2759"/>
<dbReference type="PhylomeDB" id="Q5F418"/>
<dbReference type="PRO" id="PR:Q5F418"/>
<dbReference type="Proteomes" id="UP000000539">
    <property type="component" value="Unassembled WGS sequence"/>
</dbReference>
<dbReference type="GO" id="GO:0005634">
    <property type="term" value="C:nucleus"/>
    <property type="evidence" value="ECO:0000318"/>
    <property type="project" value="GO_Central"/>
</dbReference>
<dbReference type="GO" id="GO:0022624">
    <property type="term" value="C:proteasome accessory complex"/>
    <property type="evidence" value="ECO:0000250"/>
    <property type="project" value="UniProtKB"/>
</dbReference>
<dbReference type="GO" id="GO:0008540">
    <property type="term" value="C:proteasome regulatory particle, base subcomplex"/>
    <property type="evidence" value="ECO:0000318"/>
    <property type="project" value="GO_Central"/>
</dbReference>
<dbReference type="GO" id="GO:0034515">
    <property type="term" value="C:proteasome storage granule"/>
    <property type="evidence" value="ECO:0000318"/>
    <property type="project" value="GO_Central"/>
</dbReference>
<dbReference type="GO" id="GO:0030234">
    <property type="term" value="F:enzyme regulator activity"/>
    <property type="evidence" value="ECO:0007669"/>
    <property type="project" value="InterPro"/>
</dbReference>
<dbReference type="GO" id="GO:0043161">
    <property type="term" value="P:proteasome-mediated ubiquitin-dependent protein catabolic process"/>
    <property type="evidence" value="ECO:0000318"/>
    <property type="project" value="GO_Central"/>
</dbReference>
<dbReference type="GO" id="GO:0042176">
    <property type="term" value="P:regulation of protein catabolic process"/>
    <property type="evidence" value="ECO:0007669"/>
    <property type="project" value="InterPro"/>
</dbReference>
<dbReference type="FunFam" id="1.25.10.10:FF:000017">
    <property type="entry name" value="26S proteasome non-ATPase regulatory subunit 1"/>
    <property type="match status" value="1"/>
</dbReference>
<dbReference type="Gene3D" id="1.25.10.10">
    <property type="entry name" value="Leucine-rich Repeat Variant"/>
    <property type="match status" value="1"/>
</dbReference>
<dbReference type="InterPro" id="IPR016642">
    <property type="entry name" value="26S_Psome_Rpn2"/>
</dbReference>
<dbReference type="InterPro" id="IPR011989">
    <property type="entry name" value="ARM-like"/>
</dbReference>
<dbReference type="InterPro" id="IPR016024">
    <property type="entry name" value="ARM-type_fold"/>
</dbReference>
<dbReference type="InterPro" id="IPR002015">
    <property type="entry name" value="Proteasome/cyclosome_rpt"/>
</dbReference>
<dbReference type="InterPro" id="IPR048570">
    <property type="entry name" value="PSMD1_RPN2_N"/>
</dbReference>
<dbReference type="InterPro" id="IPR040623">
    <property type="entry name" value="RPN2_C"/>
</dbReference>
<dbReference type="PANTHER" id="PTHR10943">
    <property type="entry name" value="26S PROTEASOME NON-ATPASE REGULATORY SUBUNIT"/>
    <property type="match status" value="1"/>
</dbReference>
<dbReference type="PANTHER" id="PTHR10943:SF2">
    <property type="entry name" value="26S PROTEASOME NON-ATPASE REGULATORY SUBUNIT 1"/>
    <property type="match status" value="1"/>
</dbReference>
<dbReference type="Pfam" id="PF13646">
    <property type="entry name" value="HEAT_2"/>
    <property type="match status" value="1"/>
</dbReference>
<dbReference type="Pfam" id="PF01851">
    <property type="entry name" value="PC_rep"/>
    <property type="match status" value="4"/>
</dbReference>
<dbReference type="Pfam" id="PF18004">
    <property type="entry name" value="RPN2_C"/>
    <property type="match status" value="1"/>
</dbReference>
<dbReference type="Pfam" id="PF21505">
    <property type="entry name" value="RPN2_N"/>
    <property type="match status" value="1"/>
</dbReference>
<dbReference type="PIRSF" id="PIRSF015947">
    <property type="entry name" value="26S_Psome_Rpn2"/>
    <property type="match status" value="1"/>
</dbReference>
<dbReference type="SUPFAM" id="SSF48371">
    <property type="entry name" value="ARM repeat"/>
    <property type="match status" value="1"/>
</dbReference>
<accession>Q5F418</accession>
<proteinExistence type="evidence at transcript level"/>
<reference key="1">
    <citation type="journal article" date="2005" name="Genome Biol.">
        <title>Full-length cDNAs from chicken bursal lymphocytes to facilitate gene function analysis.</title>
        <authorList>
            <person name="Caldwell R.B."/>
            <person name="Kierzek A.M."/>
            <person name="Arakawa H."/>
            <person name="Bezzubov Y."/>
            <person name="Zaim J."/>
            <person name="Fiedler P."/>
            <person name="Kutter S."/>
            <person name="Blagodatski A."/>
            <person name="Kostovska D."/>
            <person name="Koter M."/>
            <person name="Plachy J."/>
            <person name="Carninci P."/>
            <person name="Hayashizaki Y."/>
            <person name="Buerstedde J.-M."/>
        </authorList>
    </citation>
    <scope>NUCLEOTIDE SEQUENCE [LARGE SCALE MRNA]</scope>
    <source>
        <strain>CB</strain>
        <tissue>Bursa of Fabricius</tissue>
    </source>
</reference>
<keyword id="KW-0647">Proteasome</keyword>
<keyword id="KW-1185">Reference proteome</keyword>
<keyword id="KW-0677">Repeat</keyword>
<comment type="function">
    <text evidence="1">Component of the 26S proteasome, a multiprotein complex involved in the ATP-dependent degradation of ubiquitinated proteins. This complex plays a key role in the maintenance of protein homeostasis by removing misfolded or damaged proteins, which could impair cellular functions, and by removing proteins whose functions are no longer required. Therefore, the proteasome participates in numerous cellular processes, including cell cycle progression, apoptosis, or DNA damage repair.</text>
</comment>
<comment type="subunit">
    <text evidence="1">Component of the 19S proteasome regulatory particle complex. The 26S proteasome consists of a 20S core particle (CP) and two 19S regulatory subunits (RP). The regulatory particle is made of a lid composed of 9 subunits, a base containing 6 ATPases and few additional components including PSMD1. Interacts with ADRM1.</text>
</comment>
<comment type="similarity">
    <text evidence="3">Belongs to the proteasome subunit S1 family.</text>
</comment>
<protein>
    <recommendedName>
        <fullName>26S proteasome non-ATPase regulatory subunit 1</fullName>
    </recommendedName>
    <alternativeName>
        <fullName>26S proteasome regulatory subunit RPN2</fullName>
    </alternativeName>
    <alternativeName>
        <fullName>26S proteasome regulatory subunit S1</fullName>
    </alternativeName>
</protein>
<name>PSMD1_CHICK</name>
<feature type="chain" id="PRO_0000312651" description="26S proteasome non-ATPase regulatory subunit 1">
    <location>
        <begin position="1"/>
        <end position="955"/>
    </location>
</feature>
<feature type="repeat" description="PC 1">
    <location>
        <begin position="403"/>
        <end position="436"/>
    </location>
</feature>
<feature type="repeat" description="PC 2">
    <location>
        <begin position="441"/>
        <end position="474"/>
    </location>
</feature>
<feature type="repeat" description="PC 3">
    <location>
        <begin position="476"/>
        <end position="510"/>
    </location>
</feature>
<feature type="repeat" description="PC 4">
    <location>
        <begin position="511"/>
        <end position="545"/>
    </location>
</feature>
<feature type="repeat" description="PC 5">
    <location>
        <begin position="547"/>
        <end position="580"/>
    </location>
</feature>
<feature type="repeat" description="PC 6">
    <location>
        <begin position="581"/>
        <end position="616"/>
    </location>
</feature>
<feature type="repeat" description="PC 7">
    <location>
        <begin position="617"/>
        <end position="649"/>
    </location>
</feature>
<feature type="repeat" description="PC 8">
    <location>
        <begin position="651"/>
        <end position="685"/>
    </location>
</feature>
<feature type="repeat" description="PC 9">
    <location>
        <begin position="686"/>
        <end position="726"/>
    </location>
</feature>
<feature type="repeat" description="PC 10">
    <location>
        <begin position="729"/>
        <end position="761"/>
    </location>
</feature>
<feature type="region of interest" description="Disordered" evidence="2">
    <location>
        <begin position="279"/>
        <end position="313"/>
    </location>
</feature>
<feature type="region of interest" description="Disordered" evidence="2">
    <location>
        <begin position="839"/>
        <end position="879"/>
    </location>
</feature>
<feature type="region of interest" description="Disordered" evidence="2">
    <location>
        <begin position="932"/>
        <end position="955"/>
    </location>
</feature>
<feature type="compositionally biased region" description="Basic and acidic residues" evidence="2">
    <location>
        <begin position="290"/>
        <end position="303"/>
    </location>
</feature>
<feature type="compositionally biased region" description="Basic and acidic residues" evidence="2">
    <location>
        <begin position="842"/>
        <end position="854"/>
    </location>
</feature>
<feature type="compositionally biased region" description="Basic and acidic residues" evidence="2">
    <location>
        <begin position="861"/>
        <end position="874"/>
    </location>
</feature>
<feature type="compositionally biased region" description="Acidic residues" evidence="2">
    <location>
        <begin position="938"/>
        <end position="955"/>
    </location>
</feature>
<organism>
    <name type="scientific">Gallus gallus</name>
    <name type="common">Chicken</name>
    <dbReference type="NCBI Taxonomy" id="9031"/>
    <lineage>
        <taxon>Eukaryota</taxon>
        <taxon>Metazoa</taxon>
        <taxon>Chordata</taxon>
        <taxon>Craniata</taxon>
        <taxon>Vertebrata</taxon>
        <taxon>Euteleostomi</taxon>
        <taxon>Archelosauria</taxon>
        <taxon>Archosauria</taxon>
        <taxon>Dinosauria</taxon>
        <taxon>Saurischia</taxon>
        <taxon>Theropoda</taxon>
        <taxon>Coelurosauria</taxon>
        <taxon>Aves</taxon>
        <taxon>Neognathae</taxon>
        <taxon>Galloanserae</taxon>
        <taxon>Galliformes</taxon>
        <taxon>Phasianidae</taxon>
        <taxon>Phasianinae</taxon>
        <taxon>Gallus</taxon>
    </lineage>
</organism>
<evidence type="ECO:0000250" key="1">
    <source>
        <dbReference type="UniProtKB" id="Q99460"/>
    </source>
</evidence>
<evidence type="ECO:0000256" key="2">
    <source>
        <dbReference type="SAM" id="MobiDB-lite"/>
    </source>
</evidence>
<evidence type="ECO:0000305" key="3"/>